<name>AROB_FRATF</name>
<feature type="chain" id="PRO_1000094518" description="3-dehydroquinate synthase">
    <location>
        <begin position="1"/>
        <end position="359"/>
    </location>
</feature>
<feature type="binding site" evidence="1">
    <location>
        <begin position="70"/>
        <end position="75"/>
    </location>
    <ligand>
        <name>NAD(+)</name>
        <dbReference type="ChEBI" id="CHEBI:57540"/>
    </ligand>
</feature>
<feature type="binding site" evidence="1">
    <location>
        <begin position="105"/>
        <end position="109"/>
    </location>
    <ligand>
        <name>NAD(+)</name>
        <dbReference type="ChEBI" id="CHEBI:57540"/>
    </ligand>
</feature>
<feature type="binding site" evidence="1">
    <location>
        <begin position="129"/>
        <end position="130"/>
    </location>
    <ligand>
        <name>NAD(+)</name>
        <dbReference type="ChEBI" id="CHEBI:57540"/>
    </ligand>
</feature>
<feature type="binding site" evidence="1">
    <location>
        <position position="142"/>
    </location>
    <ligand>
        <name>NAD(+)</name>
        <dbReference type="ChEBI" id="CHEBI:57540"/>
    </ligand>
</feature>
<feature type="binding site" evidence="1">
    <location>
        <position position="151"/>
    </location>
    <ligand>
        <name>NAD(+)</name>
        <dbReference type="ChEBI" id="CHEBI:57540"/>
    </ligand>
</feature>
<feature type="binding site" evidence="1">
    <location>
        <begin position="169"/>
        <end position="172"/>
    </location>
    <ligand>
        <name>NAD(+)</name>
        <dbReference type="ChEBI" id="CHEBI:57540"/>
    </ligand>
</feature>
<feature type="binding site" evidence="1">
    <location>
        <position position="184"/>
    </location>
    <ligand>
        <name>Zn(2+)</name>
        <dbReference type="ChEBI" id="CHEBI:29105"/>
    </ligand>
</feature>
<feature type="binding site" evidence="1">
    <location>
        <position position="247"/>
    </location>
    <ligand>
        <name>Zn(2+)</name>
        <dbReference type="ChEBI" id="CHEBI:29105"/>
    </ligand>
</feature>
<feature type="binding site" evidence="1">
    <location>
        <position position="264"/>
    </location>
    <ligand>
        <name>Zn(2+)</name>
        <dbReference type="ChEBI" id="CHEBI:29105"/>
    </ligand>
</feature>
<proteinExistence type="inferred from homology"/>
<reference key="1">
    <citation type="journal article" date="2009" name="PLoS ONE">
        <title>Complete genome sequence of Francisella tularensis subspecies holarctica FTNF002-00.</title>
        <authorList>
            <person name="Barabote R.D."/>
            <person name="Xie G."/>
            <person name="Brettin T.S."/>
            <person name="Hinrichs S.H."/>
            <person name="Fey P.D."/>
            <person name="Jay J.J."/>
            <person name="Engle J.L."/>
            <person name="Godbole S.D."/>
            <person name="Noronha J.M."/>
            <person name="Scheuermann R.H."/>
            <person name="Zhou L.W."/>
            <person name="Lion C."/>
            <person name="Dempsey M.P."/>
        </authorList>
    </citation>
    <scope>NUCLEOTIDE SEQUENCE [LARGE SCALE GENOMIC DNA]</scope>
    <source>
        <strain>FTNF002-00 / FTA</strain>
    </source>
</reference>
<comment type="function">
    <text evidence="1">Catalyzes the conversion of 3-deoxy-D-arabino-heptulosonate 7-phosphate (DAHP) to dehydroquinate (DHQ).</text>
</comment>
<comment type="catalytic activity">
    <reaction evidence="1">
        <text>7-phospho-2-dehydro-3-deoxy-D-arabino-heptonate = 3-dehydroquinate + phosphate</text>
        <dbReference type="Rhea" id="RHEA:21968"/>
        <dbReference type="ChEBI" id="CHEBI:32364"/>
        <dbReference type="ChEBI" id="CHEBI:43474"/>
        <dbReference type="ChEBI" id="CHEBI:58394"/>
        <dbReference type="EC" id="4.2.3.4"/>
    </reaction>
</comment>
<comment type="cofactor">
    <cofactor evidence="1">
        <name>Co(2+)</name>
        <dbReference type="ChEBI" id="CHEBI:48828"/>
    </cofactor>
    <cofactor evidence="1">
        <name>Zn(2+)</name>
        <dbReference type="ChEBI" id="CHEBI:29105"/>
    </cofactor>
    <text evidence="1">Binds 1 divalent metal cation per subunit. Can use either Co(2+) or Zn(2+).</text>
</comment>
<comment type="cofactor">
    <cofactor evidence="1">
        <name>NAD(+)</name>
        <dbReference type="ChEBI" id="CHEBI:57540"/>
    </cofactor>
</comment>
<comment type="pathway">
    <text evidence="1">Metabolic intermediate biosynthesis; chorismate biosynthesis; chorismate from D-erythrose 4-phosphate and phosphoenolpyruvate: step 2/7.</text>
</comment>
<comment type="subcellular location">
    <subcellularLocation>
        <location evidence="1">Cytoplasm</location>
    </subcellularLocation>
</comment>
<comment type="similarity">
    <text evidence="1">Belongs to the sugar phosphate cyclases superfamily. Dehydroquinate synthase family.</text>
</comment>
<organism>
    <name type="scientific">Francisella tularensis subsp. holarctica (strain FTNF002-00 / FTA)</name>
    <dbReference type="NCBI Taxonomy" id="458234"/>
    <lineage>
        <taxon>Bacteria</taxon>
        <taxon>Pseudomonadati</taxon>
        <taxon>Pseudomonadota</taxon>
        <taxon>Gammaproteobacteria</taxon>
        <taxon>Thiotrichales</taxon>
        <taxon>Francisellaceae</taxon>
        <taxon>Francisella</taxon>
    </lineage>
</organism>
<accession>A7NBH0</accession>
<gene>
    <name evidence="1" type="primary">aroB</name>
    <name type="ordered locus">FTA_0847</name>
</gene>
<sequence length="359" mass="40170">MISKLSVNPTFSPSYNIIVDSVLDFSHILEYVTNKQVLVVTNTTVAKLYLTKFLAALVDDLDVRTCILEDGEQYKSQQSLDKILSTLLENHFTRNSTVLVALGGGVIGDITGFAAAIYQRGIDFIQIPTTLLSQVDSSVGGKTAINHQLGKNMIGAFYQPKVVYTSIEFYKTLPQREYIAGMAEVVKYAFISKDFYLWLDSNRDKILAKDSVTLIEMVKRSCQIKAQVVAMDEKELTGARAILNFGHTFGHAIEKCQNYRGLKHGEAVGVGMAQAIDFSHYLGLISQQQAKDFKDFIVSFGISIDFPNDICQKEFLEAMLLDKKNSNKELKFILIENIGSLSLQKQSKNELEQFLDISR</sequence>
<evidence type="ECO:0000255" key="1">
    <source>
        <dbReference type="HAMAP-Rule" id="MF_00110"/>
    </source>
</evidence>
<keyword id="KW-0028">Amino-acid biosynthesis</keyword>
<keyword id="KW-0057">Aromatic amino acid biosynthesis</keyword>
<keyword id="KW-0170">Cobalt</keyword>
<keyword id="KW-0963">Cytoplasm</keyword>
<keyword id="KW-0456">Lyase</keyword>
<keyword id="KW-0479">Metal-binding</keyword>
<keyword id="KW-0520">NAD</keyword>
<keyword id="KW-0547">Nucleotide-binding</keyword>
<keyword id="KW-0862">Zinc</keyword>
<protein>
    <recommendedName>
        <fullName evidence="1">3-dehydroquinate synthase</fullName>
        <shortName evidence="1">DHQS</shortName>
        <ecNumber evidence="1">4.2.3.4</ecNumber>
    </recommendedName>
</protein>
<dbReference type="EC" id="4.2.3.4" evidence="1"/>
<dbReference type="EMBL" id="CP000803">
    <property type="protein sequence ID" value="ABU61323.1"/>
    <property type="molecule type" value="Genomic_DNA"/>
</dbReference>
<dbReference type="RefSeq" id="WP_003015354.1">
    <property type="nucleotide sequence ID" value="NC_009749.1"/>
</dbReference>
<dbReference type="SMR" id="A7NBH0"/>
<dbReference type="KEGG" id="fta:FTA_0847"/>
<dbReference type="HOGENOM" id="CLU_001201_0_2_6"/>
<dbReference type="UniPathway" id="UPA00053">
    <property type="reaction ID" value="UER00085"/>
</dbReference>
<dbReference type="GO" id="GO:0005737">
    <property type="term" value="C:cytoplasm"/>
    <property type="evidence" value="ECO:0007669"/>
    <property type="project" value="UniProtKB-SubCell"/>
</dbReference>
<dbReference type="GO" id="GO:0003856">
    <property type="term" value="F:3-dehydroquinate synthase activity"/>
    <property type="evidence" value="ECO:0007669"/>
    <property type="project" value="UniProtKB-UniRule"/>
</dbReference>
<dbReference type="GO" id="GO:0046872">
    <property type="term" value="F:metal ion binding"/>
    <property type="evidence" value="ECO:0007669"/>
    <property type="project" value="UniProtKB-KW"/>
</dbReference>
<dbReference type="GO" id="GO:0000166">
    <property type="term" value="F:nucleotide binding"/>
    <property type="evidence" value="ECO:0007669"/>
    <property type="project" value="UniProtKB-KW"/>
</dbReference>
<dbReference type="GO" id="GO:0008652">
    <property type="term" value="P:amino acid biosynthetic process"/>
    <property type="evidence" value="ECO:0007669"/>
    <property type="project" value="UniProtKB-KW"/>
</dbReference>
<dbReference type="GO" id="GO:0009073">
    <property type="term" value="P:aromatic amino acid family biosynthetic process"/>
    <property type="evidence" value="ECO:0007669"/>
    <property type="project" value="UniProtKB-KW"/>
</dbReference>
<dbReference type="GO" id="GO:0009423">
    <property type="term" value="P:chorismate biosynthetic process"/>
    <property type="evidence" value="ECO:0007669"/>
    <property type="project" value="UniProtKB-UniRule"/>
</dbReference>
<dbReference type="CDD" id="cd08195">
    <property type="entry name" value="DHQS"/>
    <property type="match status" value="1"/>
</dbReference>
<dbReference type="FunFam" id="3.40.50.1970:FF:000001">
    <property type="entry name" value="3-dehydroquinate synthase"/>
    <property type="match status" value="1"/>
</dbReference>
<dbReference type="Gene3D" id="3.40.50.1970">
    <property type="match status" value="1"/>
</dbReference>
<dbReference type="Gene3D" id="1.20.1090.10">
    <property type="entry name" value="Dehydroquinate synthase-like - alpha domain"/>
    <property type="match status" value="1"/>
</dbReference>
<dbReference type="HAMAP" id="MF_00110">
    <property type="entry name" value="DHQ_synthase"/>
    <property type="match status" value="1"/>
</dbReference>
<dbReference type="InterPro" id="IPR050071">
    <property type="entry name" value="Dehydroquinate_synthase"/>
</dbReference>
<dbReference type="InterPro" id="IPR016037">
    <property type="entry name" value="DHQ_synth_AroB"/>
</dbReference>
<dbReference type="InterPro" id="IPR030963">
    <property type="entry name" value="DHQ_synth_fam"/>
</dbReference>
<dbReference type="InterPro" id="IPR030960">
    <property type="entry name" value="DHQS/DOIS_N"/>
</dbReference>
<dbReference type="InterPro" id="IPR056179">
    <property type="entry name" value="DHQS_C"/>
</dbReference>
<dbReference type="NCBIfam" id="TIGR01357">
    <property type="entry name" value="aroB"/>
    <property type="match status" value="1"/>
</dbReference>
<dbReference type="PANTHER" id="PTHR43622">
    <property type="entry name" value="3-DEHYDROQUINATE SYNTHASE"/>
    <property type="match status" value="1"/>
</dbReference>
<dbReference type="PANTHER" id="PTHR43622:SF7">
    <property type="entry name" value="3-DEHYDROQUINATE SYNTHASE, CHLOROPLASTIC"/>
    <property type="match status" value="1"/>
</dbReference>
<dbReference type="Pfam" id="PF01761">
    <property type="entry name" value="DHQ_synthase"/>
    <property type="match status" value="1"/>
</dbReference>
<dbReference type="Pfam" id="PF24621">
    <property type="entry name" value="DHQS_C"/>
    <property type="match status" value="1"/>
</dbReference>
<dbReference type="PIRSF" id="PIRSF001455">
    <property type="entry name" value="DHQ_synth"/>
    <property type="match status" value="1"/>
</dbReference>
<dbReference type="SUPFAM" id="SSF56796">
    <property type="entry name" value="Dehydroquinate synthase-like"/>
    <property type="match status" value="1"/>
</dbReference>